<comment type="function">
    <text evidence="1">Can catalyze the hydrolysis of ATP in the presence of single-stranded DNA, the ATP-dependent uptake of single-stranded DNA by duplex DNA, and the ATP-dependent hybridization of homologous single-stranded DNAs. It interacts with LexA causing its activation and leading to its autocatalytic cleavage.</text>
</comment>
<comment type="subcellular location">
    <subcellularLocation>
        <location evidence="1">Cytoplasm</location>
    </subcellularLocation>
</comment>
<comment type="similarity">
    <text evidence="1">Belongs to the RecA family.</text>
</comment>
<dbReference type="EMBL" id="AJ621666">
    <property type="protein sequence ID" value="CAF21791.1"/>
    <property type="molecule type" value="Genomic_DNA"/>
</dbReference>
<dbReference type="RefSeq" id="WP_050339350.1">
    <property type="nucleotide sequence ID" value="NZ_BJZC01000032.1"/>
</dbReference>
<dbReference type="SMR" id="Q6KCK3"/>
<dbReference type="STRING" id="1589.GCA_001188985_02308"/>
<dbReference type="GeneID" id="49394474"/>
<dbReference type="OrthoDB" id="9776733at2"/>
<dbReference type="GO" id="GO:0005829">
    <property type="term" value="C:cytosol"/>
    <property type="evidence" value="ECO:0007669"/>
    <property type="project" value="TreeGrafter"/>
</dbReference>
<dbReference type="GO" id="GO:0005524">
    <property type="term" value="F:ATP binding"/>
    <property type="evidence" value="ECO:0007669"/>
    <property type="project" value="UniProtKB-UniRule"/>
</dbReference>
<dbReference type="GO" id="GO:0016887">
    <property type="term" value="F:ATP hydrolysis activity"/>
    <property type="evidence" value="ECO:0007669"/>
    <property type="project" value="InterPro"/>
</dbReference>
<dbReference type="GO" id="GO:0140664">
    <property type="term" value="F:ATP-dependent DNA damage sensor activity"/>
    <property type="evidence" value="ECO:0007669"/>
    <property type="project" value="InterPro"/>
</dbReference>
<dbReference type="GO" id="GO:0003684">
    <property type="term" value="F:damaged DNA binding"/>
    <property type="evidence" value="ECO:0007669"/>
    <property type="project" value="UniProtKB-UniRule"/>
</dbReference>
<dbReference type="GO" id="GO:0003697">
    <property type="term" value="F:single-stranded DNA binding"/>
    <property type="evidence" value="ECO:0007669"/>
    <property type="project" value="UniProtKB-UniRule"/>
</dbReference>
<dbReference type="GO" id="GO:0006310">
    <property type="term" value="P:DNA recombination"/>
    <property type="evidence" value="ECO:0007669"/>
    <property type="project" value="UniProtKB-UniRule"/>
</dbReference>
<dbReference type="GO" id="GO:0006281">
    <property type="term" value="P:DNA repair"/>
    <property type="evidence" value="ECO:0007669"/>
    <property type="project" value="UniProtKB-UniRule"/>
</dbReference>
<dbReference type="GO" id="GO:0009432">
    <property type="term" value="P:SOS response"/>
    <property type="evidence" value="ECO:0007669"/>
    <property type="project" value="UniProtKB-UniRule"/>
</dbReference>
<dbReference type="CDD" id="cd00983">
    <property type="entry name" value="RecA"/>
    <property type="match status" value="1"/>
</dbReference>
<dbReference type="FunFam" id="3.40.50.300:FF:000087">
    <property type="entry name" value="Recombinase RecA"/>
    <property type="match status" value="1"/>
</dbReference>
<dbReference type="Gene3D" id="3.40.50.300">
    <property type="entry name" value="P-loop containing nucleotide triphosphate hydrolases"/>
    <property type="match status" value="1"/>
</dbReference>
<dbReference type="HAMAP" id="MF_00268">
    <property type="entry name" value="RecA"/>
    <property type="match status" value="1"/>
</dbReference>
<dbReference type="InterPro" id="IPR003593">
    <property type="entry name" value="AAA+_ATPase"/>
</dbReference>
<dbReference type="InterPro" id="IPR013765">
    <property type="entry name" value="DNA_recomb/repair_RecA"/>
</dbReference>
<dbReference type="InterPro" id="IPR020584">
    <property type="entry name" value="DNA_recomb/repair_RecA_CS"/>
</dbReference>
<dbReference type="InterPro" id="IPR027417">
    <property type="entry name" value="P-loop_NTPase"/>
</dbReference>
<dbReference type="InterPro" id="IPR049261">
    <property type="entry name" value="RecA-like_C"/>
</dbReference>
<dbReference type="InterPro" id="IPR049428">
    <property type="entry name" value="RecA-like_N"/>
</dbReference>
<dbReference type="InterPro" id="IPR020588">
    <property type="entry name" value="RecA_ATP-bd"/>
</dbReference>
<dbReference type="InterPro" id="IPR023400">
    <property type="entry name" value="RecA_C_sf"/>
</dbReference>
<dbReference type="InterPro" id="IPR020587">
    <property type="entry name" value="RecA_monomer-monomer_interface"/>
</dbReference>
<dbReference type="NCBIfam" id="TIGR02012">
    <property type="entry name" value="tigrfam_recA"/>
    <property type="match status" value="1"/>
</dbReference>
<dbReference type="PANTHER" id="PTHR45900:SF1">
    <property type="entry name" value="MITOCHONDRIAL DNA REPAIR PROTEIN RECA HOMOLOG-RELATED"/>
    <property type="match status" value="1"/>
</dbReference>
<dbReference type="PANTHER" id="PTHR45900">
    <property type="entry name" value="RECA"/>
    <property type="match status" value="1"/>
</dbReference>
<dbReference type="Pfam" id="PF00154">
    <property type="entry name" value="RecA"/>
    <property type="match status" value="1"/>
</dbReference>
<dbReference type="Pfam" id="PF21096">
    <property type="entry name" value="RecA_C"/>
    <property type="match status" value="1"/>
</dbReference>
<dbReference type="PRINTS" id="PR00142">
    <property type="entry name" value="RECA"/>
</dbReference>
<dbReference type="SMART" id="SM00382">
    <property type="entry name" value="AAA"/>
    <property type="match status" value="1"/>
</dbReference>
<dbReference type="SUPFAM" id="SSF52540">
    <property type="entry name" value="P-loop containing nucleoside triphosphate hydrolases"/>
    <property type="match status" value="1"/>
</dbReference>
<dbReference type="SUPFAM" id="SSF54752">
    <property type="entry name" value="RecA protein, C-terminal domain"/>
    <property type="match status" value="1"/>
</dbReference>
<dbReference type="PROSITE" id="PS00321">
    <property type="entry name" value="RECA_1"/>
    <property type="match status" value="1"/>
</dbReference>
<dbReference type="PROSITE" id="PS50162">
    <property type="entry name" value="RECA_2"/>
    <property type="match status" value="1"/>
</dbReference>
<dbReference type="PROSITE" id="PS50163">
    <property type="entry name" value="RECA_3"/>
    <property type="match status" value="1"/>
</dbReference>
<feature type="chain" id="PRO_0000122735" description="Protein RecA">
    <location>
        <begin position="1"/>
        <end position="378"/>
    </location>
</feature>
<feature type="region of interest" description="Disordered" evidence="2">
    <location>
        <begin position="325"/>
        <end position="378"/>
    </location>
</feature>
<feature type="compositionally biased region" description="Basic and acidic residues" evidence="2">
    <location>
        <begin position="339"/>
        <end position="351"/>
    </location>
</feature>
<feature type="binding site" evidence="1">
    <location>
        <begin position="65"/>
        <end position="72"/>
    </location>
    <ligand>
        <name>ATP</name>
        <dbReference type="ChEBI" id="CHEBI:30616"/>
    </ligand>
</feature>
<sequence>MADARKAALDTALKKIEKNFGKGAIMRMGDAAQTTISTISSGSLALDDALGVGGYPRGRIVEIYGPESSGKTTVALHAVAEVQKQGGTAAYIDAENALDPVYAEHLGVNIDDLLLSQPDTGEQGLEIADALVSSGAVDILVVDSVAALVPRAEIEGEMGDAHVGLQARLMSQALRKLSGTLNKTKTIALFINQIREKVGVMFGNPETTPGGRALKFYATIRLEVRRAEQIKEGTNIIGNRVRIKVVKNKVAPPFKRAEVDIMYGQGISQTGEIVDMAAEKDIVKKSGSWYSYGDDRIGQGRENAKKYLDEHPDVMAEIRQKVRDAYGMDQTGEEDDQADDKSKDKATKPSDKSQAQAKPKKPVATETSLDLDDSKTDK</sequence>
<reference key="1">
    <citation type="journal article" date="2005" name="Int. J. Syst. Evol. Microbiol.">
        <title>Lactobacillus plantarum subsp. argentoratensis subsp. nov., isolated from vegetable matrices.</title>
        <authorList>
            <person name="Bringel F."/>
            <person name="Castioni A."/>
            <person name="Olukoya D.K."/>
            <person name="Felis G.E."/>
            <person name="Torriani S."/>
            <person name="Dellaglio F."/>
        </authorList>
    </citation>
    <scope>NUCLEOTIDE SEQUENCE [GENOMIC DNA]</scope>
    <source>
        <strain>ATCC 8041 / DSM 20314 / BCRC 11053 / JCM 1558 / KCTC 3120 / LMG 10755 / NBRC 106467 / NCDO 363 / NCIMB 8026 / 124-2</strain>
    </source>
</reference>
<organism>
    <name type="scientific">Lactiplantibacillus pentosus</name>
    <name type="common">Lactobacillus pentosus</name>
    <dbReference type="NCBI Taxonomy" id="1589"/>
    <lineage>
        <taxon>Bacteria</taxon>
        <taxon>Bacillati</taxon>
        <taxon>Bacillota</taxon>
        <taxon>Bacilli</taxon>
        <taxon>Lactobacillales</taxon>
        <taxon>Lactobacillaceae</taxon>
        <taxon>Lactiplantibacillus</taxon>
    </lineage>
</organism>
<name>RECA_LACPE</name>
<keyword id="KW-0067">ATP-binding</keyword>
<keyword id="KW-0963">Cytoplasm</keyword>
<keyword id="KW-0227">DNA damage</keyword>
<keyword id="KW-0233">DNA recombination</keyword>
<keyword id="KW-0234">DNA repair</keyword>
<keyword id="KW-0238">DNA-binding</keyword>
<keyword id="KW-0547">Nucleotide-binding</keyword>
<keyword id="KW-0742">SOS response</keyword>
<gene>
    <name evidence="1" type="primary">recA</name>
</gene>
<evidence type="ECO:0000255" key="1">
    <source>
        <dbReference type="HAMAP-Rule" id="MF_00268"/>
    </source>
</evidence>
<evidence type="ECO:0000256" key="2">
    <source>
        <dbReference type="SAM" id="MobiDB-lite"/>
    </source>
</evidence>
<proteinExistence type="inferred from homology"/>
<protein>
    <recommendedName>
        <fullName evidence="1">Protein RecA</fullName>
    </recommendedName>
    <alternativeName>
        <fullName evidence="1">Recombinase A</fullName>
    </alternativeName>
</protein>
<accession>Q6KCK3</accession>